<sequence length="122" mass="14485">MHRLNKKAGDYGEKAAEIYLKKSGYTILNRNFRCFLGEVDIIAKNKDYITFVEVKSRWSDTYGLPCEAVNYRKKLKIYRTAKYYIASKSLINYNFRFDVIEVILNHQNDSYDLKFIENAFQI</sequence>
<name>Y1763_CLOAB</name>
<reference key="1">
    <citation type="journal article" date="2001" name="J. Bacteriol.">
        <title>Genome sequence and comparative analysis of the solvent-producing bacterium Clostridium acetobutylicum.</title>
        <authorList>
            <person name="Noelling J."/>
            <person name="Breton G."/>
            <person name="Omelchenko M.V."/>
            <person name="Makarova K.S."/>
            <person name="Zeng Q."/>
            <person name="Gibson R."/>
            <person name="Lee H.M."/>
            <person name="Dubois J."/>
            <person name="Qiu D."/>
            <person name="Hitti J."/>
            <person name="Wolf Y.I."/>
            <person name="Tatusov R.L."/>
            <person name="Sabathe F."/>
            <person name="Doucette-Stamm L.A."/>
            <person name="Soucaille P."/>
            <person name="Daly M.J."/>
            <person name="Bennett G.N."/>
            <person name="Koonin E.V."/>
            <person name="Smith D.R."/>
        </authorList>
    </citation>
    <scope>NUCLEOTIDE SEQUENCE [LARGE SCALE GENOMIC DNA]</scope>
    <source>
        <strain>ATCC 824 / DSM 792 / JCM 1419 / IAM 19013 / LMG 5710 / NBRC 13948 / NRRL B-527 / VKM B-1787 / 2291 / W</strain>
    </source>
</reference>
<evidence type="ECO:0000255" key="1">
    <source>
        <dbReference type="HAMAP-Rule" id="MF_00048"/>
    </source>
</evidence>
<protein>
    <recommendedName>
        <fullName evidence="1">UPF0102 protein CA_C1763</fullName>
    </recommendedName>
</protein>
<accession>Q97I89</accession>
<dbReference type="EMBL" id="AE001437">
    <property type="protein sequence ID" value="AAK79729.1"/>
    <property type="molecule type" value="Genomic_DNA"/>
</dbReference>
<dbReference type="PIR" id="F97117">
    <property type="entry name" value="F97117"/>
</dbReference>
<dbReference type="RefSeq" id="NP_348389.1">
    <property type="nucleotide sequence ID" value="NC_003030.1"/>
</dbReference>
<dbReference type="RefSeq" id="WP_010965070.1">
    <property type="nucleotide sequence ID" value="NC_003030.1"/>
</dbReference>
<dbReference type="SMR" id="Q97I89"/>
<dbReference type="STRING" id="272562.CA_C1763"/>
<dbReference type="KEGG" id="cac:CA_C1763"/>
<dbReference type="PATRIC" id="fig|272562.8.peg.1967"/>
<dbReference type="eggNOG" id="COG0792">
    <property type="taxonomic scope" value="Bacteria"/>
</dbReference>
<dbReference type="HOGENOM" id="CLU_115353_3_1_9"/>
<dbReference type="OrthoDB" id="9802516at2"/>
<dbReference type="Proteomes" id="UP000000814">
    <property type="component" value="Chromosome"/>
</dbReference>
<dbReference type="GO" id="GO:0003676">
    <property type="term" value="F:nucleic acid binding"/>
    <property type="evidence" value="ECO:0007669"/>
    <property type="project" value="InterPro"/>
</dbReference>
<dbReference type="CDD" id="cd20736">
    <property type="entry name" value="PoNe_Nuclease"/>
    <property type="match status" value="1"/>
</dbReference>
<dbReference type="Gene3D" id="3.40.1350.10">
    <property type="match status" value="1"/>
</dbReference>
<dbReference type="HAMAP" id="MF_00048">
    <property type="entry name" value="UPF0102"/>
    <property type="match status" value="1"/>
</dbReference>
<dbReference type="InterPro" id="IPR011335">
    <property type="entry name" value="Restrct_endonuc-II-like"/>
</dbReference>
<dbReference type="InterPro" id="IPR011856">
    <property type="entry name" value="tRNA_endonuc-like_dom_sf"/>
</dbReference>
<dbReference type="InterPro" id="IPR003509">
    <property type="entry name" value="UPF0102_YraN-like"/>
</dbReference>
<dbReference type="NCBIfam" id="NF009150">
    <property type="entry name" value="PRK12497.1-3"/>
    <property type="match status" value="1"/>
</dbReference>
<dbReference type="NCBIfam" id="TIGR00252">
    <property type="entry name" value="YraN family protein"/>
    <property type="match status" value="1"/>
</dbReference>
<dbReference type="PANTHER" id="PTHR34039">
    <property type="entry name" value="UPF0102 PROTEIN YRAN"/>
    <property type="match status" value="1"/>
</dbReference>
<dbReference type="PANTHER" id="PTHR34039:SF1">
    <property type="entry name" value="UPF0102 PROTEIN YRAN"/>
    <property type="match status" value="1"/>
</dbReference>
<dbReference type="Pfam" id="PF02021">
    <property type="entry name" value="UPF0102"/>
    <property type="match status" value="1"/>
</dbReference>
<dbReference type="SUPFAM" id="SSF52980">
    <property type="entry name" value="Restriction endonuclease-like"/>
    <property type="match status" value="1"/>
</dbReference>
<comment type="similarity">
    <text evidence="1">Belongs to the UPF0102 family.</text>
</comment>
<keyword id="KW-1185">Reference proteome</keyword>
<organism>
    <name type="scientific">Clostridium acetobutylicum (strain ATCC 824 / DSM 792 / JCM 1419 / IAM 19013 / LMG 5710 / NBRC 13948 / NRRL B-527 / VKM B-1787 / 2291 / W)</name>
    <dbReference type="NCBI Taxonomy" id="272562"/>
    <lineage>
        <taxon>Bacteria</taxon>
        <taxon>Bacillati</taxon>
        <taxon>Bacillota</taxon>
        <taxon>Clostridia</taxon>
        <taxon>Eubacteriales</taxon>
        <taxon>Clostridiaceae</taxon>
        <taxon>Clostridium</taxon>
    </lineage>
</organism>
<gene>
    <name type="ordered locus">CA_C1763</name>
</gene>
<feature type="chain" id="PRO_0000167342" description="UPF0102 protein CA_C1763">
    <location>
        <begin position="1"/>
        <end position="122"/>
    </location>
</feature>
<proteinExistence type="inferred from homology"/>